<proteinExistence type="predicted"/>
<keyword id="KW-0238">DNA-binding</keyword>
<keyword id="KW-0614">Plasmid</keyword>
<keyword id="KW-1185">Reference proteome</keyword>
<keyword id="KW-0804">Transcription</keyword>
<keyword id="KW-0805">Transcription regulation</keyword>
<name>Y4WC_SINFN</name>
<sequence>MLSTNSEQTRRKPNAVDAHVGQRIRQRREWQNMSQTTLGEAIGVTFQQVQKYEKGVNRVGAGRLQQISKALKVEPSYFFEDTLNKIRSEERSASNQINIPPEVVEFVVSKEGIELIRAFSRVGDYRVRRRIVMLVKSLGAHER</sequence>
<dbReference type="EMBL" id="U00090">
    <property type="protein sequence ID" value="AAB91910.1"/>
    <property type="molecule type" value="Genomic_DNA"/>
</dbReference>
<dbReference type="RefSeq" id="NP_444123.1">
    <property type="nucleotide sequence ID" value="NC_000914.2"/>
</dbReference>
<dbReference type="RefSeq" id="WP_010875143.1">
    <property type="nucleotide sequence ID" value="NC_000914.2"/>
</dbReference>
<dbReference type="SMR" id="P55681"/>
<dbReference type="KEGG" id="rhi:NGR_a01020"/>
<dbReference type="eggNOG" id="COG1396">
    <property type="taxonomic scope" value="Bacteria"/>
</dbReference>
<dbReference type="HOGENOM" id="CLU_066192_26_0_5"/>
<dbReference type="OrthoDB" id="9797172at2"/>
<dbReference type="Proteomes" id="UP000001054">
    <property type="component" value="Plasmid pNGR234a"/>
</dbReference>
<dbReference type="GO" id="GO:0003677">
    <property type="term" value="F:DNA binding"/>
    <property type="evidence" value="ECO:0007669"/>
    <property type="project" value="UniProtKB-KW"/>
</dbReference>
<dbReference type="CDD" id="cd00093">
    <property type="entry name" value="HTH_XRE"/>
    <property type="match status" value="1"/>
</dbReference>
<dbReference type="Gene3D" id="1.10.260.40">
    <property type="entry name" value="lambda repressor-like DNA-binding domains"/>
    <property type="match status" value="1"/>
</dbReference>
<dbReference type="InterPro" id="IPR001387">
    <property type="entry name" value="Cro/C1-type_HTH"/>
</dbReference>
<dbReference type="InterPro" id="IPR010982">
    <property type="entry name" value="Lambda_DNA-bd_dom_sf"/>
</dbReference>
<dbReference type="Pfam" id="PF01381">
    <property type="entry name" value="HTH_3"/>
    <property type="match status" value="1"/>
</dbReference>
<dbReference type="SMART" id="SM00530">
    <property type="entry name" value="HTH_XRE"/>
    <property type="match status" value="1"/>
</dbReference>
<dbReference type="SUPFAM" id="SSF47413">
    <property type="entry name" value="lambda repressor-like DNA-binding domains"/>
    <property type="match status" value="1"/>
</dbReference>
<dbReference type="PROSITE" id="PS50943">
    <property type="entry name" value="HTH_CROC1"/>
    <property type="match status" value="1"/>
</dbReference>
<accession>P55681</accession>
<protein>
    <recommendedName>
        <fullName>Uncharacterized HTH-type transcriptional regulator y4wC</fullName>
    </recommendedName>
</protein>
<feature type="chain" id="PRO_0000149779" description="Uncharacterized HTH-type transcriptional regulator y4wC">
    <location>
        <begin position="1"/>
        <end position="143"/>
    </location>
</feature>
<feature type="domain" description="HTH cro/C1-type" evidence="1">
    <location>
        <begin position="24"/>
        <end position="78"/>
    </location>
</feature>
<feature type="DNA-binding region" description="H-T-H motif" evidence="1">
    <location>
        <begin position="35"/>
        <end position="54"/>
    </location>
</feature>
<gene>
    <name type="ordered locus">NGR_a01020</name>
    <name type="ORF">y4wC</name>
</gene>
<evidence type="ECO:0000255" key="1">
    <source>
        <dbReference type="PROSITE-ProRule" id="PRU00257"/>
    </source>
</evidence>
<organism>
    <name type="scientific">Sinorhizobium fredii (strain NBRC 101917 / NGR234)</name>
    <dbReference type="NCBI Taxonomy" id="394"/>
    <lineage>
        <taxon>Bacteria</taxon>
        <taxon>Pseudomonadati</taxon>
        <taxon>Pseudomonadota</taxon>
        <taxon>Alphaproteobacteria</taxon>
        <taxon>Hyphomicrobiales</taxon>
        <taxon>Rhizobiaceae</taxon>
        <taxon>Sinorhizobium/Ensifer group</taxon>
        <taxon>Sinorhizobium</taxon>
    </lineage>
</organism>
<geneLocation type="plasmid">
    <name>sym pNGR234a</name>
</geneLocation>
<reference key="1">
    <citation type="journal article" date="1997" name="Nature">
        <title>Molecular basis of symbiosis between Rhizobium and legumes.</title>
        <authorList>
            <person name="Freiberg C.A."/>
            <person name="Fellay R."/>
            <person name="Bairoch A."/>
            <person name="Broughton W.J."/>
            <person name="Rosenthal A."/>
            <person name="Perret X."/>
        </authorList>
    </citation>
    <scope>NUCLEOTIDE SEQUENCE [LARGE SCALE GENOMIC DNA]</scope>
    <source>
        <strain>NBRC 101917 / NGR234</strain>
    </source>
</reference>
<reference key="2">
    <citation type="journal article" date="2009" name="Appl. Environ. Microbiol.">
        <title>Rhizobium sp. strain NGR234 possesses a remarkable number of secretion systems.</title>
        <authorList>
            <person name="Schmeisser C."/>
            <person name="Liesegang H."/>
            <person name="Krysciak D."/>
            <person name="Bakkou N."/>
            <person name="Le Quere A."/>
            <person name="Wollherr A."/>
            <person name="Heinemeyer I."/>
            <person name="Morgenstern B."/>
            <person name="Pommerening-Roeser A."/>
            <person name="Flores M."/>
            <person name="Palacios R."/>
            <person name="Brenner S."/>
            <person name="Gottschalk G."/>
            <person name="Schmitz R.A."/>
            <person name="Broughton W.J."/>
            <person name="Perret X."/>
            <person name="Strittmatter A.W."/>
            <person name="Streit W.R."/>
        </authorList>
    </citation>
    <scope>NUCLEOTIDE SEQUENCE [LARGE SCALE GENOMIC DNA]</scope>
    <source>
        <strain>NBRC 101917 / NGR234</strain>
    </source>
</reference>